<reference key="1">
    <citation type="journal article" date="2007" name="Science">
        <title>The Calyptogena magnifica chemoautotrophic symbiont genome.</title>
        <authorList>
            <person name="Newton I.L.G."/>
            <person name="Woyke T."/>
            <person name="Auchtung T.A."/>
            <person name="Dilly G.F."/>
            <person name="Dutton R.J."/>
            <person name="Fisher M.C."/>
            <person name="Fontanez K.M."/>
            <person name="Lau E."/>
            <person name="Stewart F.J."/>
            <person name="Richardson P.M."/>
            <person name="Barry K.W."/>
            <person name="Saunders E."/>
            <person name="Detter J.C."/>
            <person name="Wu D."/>
            <person name="Eisen J.A."/>
            <person name="Cavanaugh C.M."/>
        </authorList>
    </citation>
    <scope>NUCLEOTIDE SEQUENCE [LARGE SCALE GENOMIC DNA]</scope>
</reference>
<organism>
    <name type="scientific">Ruthia magnifica subsp. Calyptogena magnifica</name>
    <dbReference type="NCBI Taxonomy" id="413404"/>
    <lineage>
        <taxon>Bacteria</taxon>
        <taxon>Pseudomonadati</taxon>
        <taxon>Pseudomonadota</taxon>
        <taxon>Gammaproteobacteria</taxon>
        <taxon>Candidatus Pseudothioglobaceae</taxon>
        <taxon>Candidatus Ruthturnera</taxon>
    </lineage>
</organism>
<comment type="function">
    <text evidence="1">Catalyzes the reversible reaction in which hydroxymethyl group from 5,10-methylenetetrahydrofolate is transferred onto alpha-ketoisovalerate to form ketopantoate.</text>
</comment>
<comment type="catalytic activity">
    <reaction evidence="1">
        <text>3-methyl-2-oxobutanoate + (6R)-5,10-methylene-5,6,7,8-tetrahydrofolate + H2O = 2-dehydropantoate + (6S)-5,6,7,8-tetrahydrofolate</text>
        <dbReference type="Rhea" id="RHEA:11824"/>
        <dbReference type="ChEBI" id="CHEBI:11561"/>
        <dbReference type="ChEBI" id="CHEBI:11851"/>
        <dbReference type="ChEBI" id="CHEBI:15377"/>
        <dbReference type="ChEBI" id="CHEBI:15636"/>
        <dbReference type="ChEBI" id="CHEBI:57453"/>
        <dbReference type="EC" id="2.1.2.11"/>
    </reaction>
</comment>
<comment type="cofactor">
    <cofactor evidence="1">
        <name>Mg(2+)</name>
        <dbReference type="ChEBI" id="CHEBI:18420"/>
    </cofactor>
    <text evidence="1">Binds 1 Mg(2+) ion per subunit.</text>
</comment>
<comment type="pathway">
    <text evidence="1">Cofactor biosynthesis; (R)-pantothenate biosynthesis; (R)-pantoate from 3-methyl-2-oxobutanoate: step 1/2.</text>
</comment>
<comment type="subunit">
    <text evidence="1">Homodecamer; pentamer of dimers.</text>
</comment>
<comment type="subcellular location">
    <subcellularLocation>
        <location evidence="1">Cytoplasm</location>
    </subcellularLocation>
</comment>
<comment type="similarity">
    <text evidence="1">Belongs to the PanB family.</text>
</comment>
<protein>
    <recommendedName>
        <fullName evidence="1">3-methyl-2-oxobutanoate hydroxymethyltransferase</fullName>
        <ecNumber evidence="1">2.1.2.11</ecNumber>
    </recommendedName>
    <alternativeName>
        <fullName evidence="1">Ketopantoate hydroxymethyltransferase</fullName>
        <shortName evidence="1">KPHMT</shortName>
    </alternativeName>
</protein>
<evidence type="ECO:0000255" key="1">
    <source>
        <dbReference type="HAMAP-Rule" id="MF_00156"/>
    </source>
</evidence>
<keyword id="KW-0963">Cytoplasm</keyword>
<keyword id="KW-0460">Magnesium</keyword>
<keyword id="KW-0479">Metal-binding</keyword>
<keyword id="KW-0566">Pantothenate biosynthesis</keyword>
<keyword id="KW-0808">Transferase</keyword>
<accession>A1AW70</accession>
<sequence>MNIEALNNFKQSGEKITCLTAYDASFASVFDVCGIDIILIGDSLGNVIQGGENTLNVSMDDMVYHTKAVTKGAQNALRISDMPYQSYTNSEQALTNAKLLIIAGAQMVKFEGGCEHEASFKIFQNNDIPVCGHLGLQPQSVIEMGGYKTEGRDKQSADKIIKDALALASWGVKVIVLECIPANLAKQVSQSLSIPTIGIGAGVNCDGQILVSYDMLGIHVGYVPKFVKNFLIDSGDIKSAVNAFIEAVKDKSFPGEQHSY</sequence>
<name>PANB_RUTMC</name>
<gene>
    <name evidence="1" type="primary">panB</name>
    <name type="ordered locus">Rmag_0415</name>
</gene>
<dbReference type="EC" id="2.1.2.11" evidence="1"/>
<dbReference type="EMBL" id="CP000488">
    <property type="protein sequence ID" value="ABL02177.1"/>
    <property type="molecule type" value="Genomic_DNA"/>
</dbReference>
<dbReference type="RefSeq" id="WP_011737802.1">
    <property type="nucleotide sequence ID" value="NC_008610.1"/>
</dbReference>
<dbReference type="SMR" id="A1AW70"/>
<dbReference type="STRING" id="413404.Rmag_0415"/>
<dbReference type="KEGG" id="rma:Rmag_0415"/>
<dbReference type="eggNOG" id="COG0413">
    <property type="taxonomic scope" value="Bacteria"/>
</dbReference>
<dbReference type="HOGENOM" id="CLU_036645_1_0_6"/>
<dbReference type="OrthoDB" id="9781789at2"/>
<dbReference type="UniPathway" id="UPA00028">
    <property type="reaction ID" value="UER00003"/>
</dbReference>
<dbReference type="Proteomes" id="UP000002587">
    <property type="component" value="Chromosome"/>
</dbReference>
<dbReference type="GO" id="GO:0005737">
    <property type="term" value="C:cytoplasm"/>
    <property type="evidence" value="ECO:0007669"/>
    <property type="project" value="UniProtKB-SubCell"/>
</dbReference>
<dbReference type="GO" id="GO:0003864">
    <property type="term" value="F:3-methyl-2-oxobutanoate hydroxymethyltransferase activity"/>
    <property type="evidence" value="ECO:0007669"/>
    <property type="project" value="UniProtKB-UniRule"/>
</dbReference>
<dbReference type="GO" id="GO:0000287">
    <property type="term" value="F:magnesium ion binding"/>
    <property type="evidence" value="ECO:0007669"/>
    <property type="project" value="TreeGrafter"/>
</dbReference>
<dbReference type="GO" id="GO:0015940">
    <property type="term" value="P:pantothenate biosynthetic process"/>
    <property type="evidence" value="ECO:0007669"/>
    <property type="project" value="UniProtKB-UniRule"/>
</dbReference>
<dbReference type="CDD" id="cd06557">
    <property type="entry name" value="KPHMT-like"/>
    <property type="match status" value="1"/>
</dbReference>
<dbReference type="FunFam" id="3.20.20.60:FF:000003">
    <property type="entry name" value="3-methyl-2-oxobutanoate hydroxymethyltransferase"/>
    <property type="match status" value="1"/>
</dbReference>
<dbReference type="Gene3D" id="3.20.20.60">
    <property type="entry name" value="Phosphoenolpyruvate-binding domains"/>
    <property type="match status" value="1"/>
</dbReference>
<dbReference type="HAMAP" id="MF_00156">
    <property type="entry name" value="PanB"/>
    <property type="match status" value="1"/>
</dbReference>
<dbReference type="InterPro" id="IPR003700">
    <property type="entry name" value="Pantoate_hydroxy_MeTrfase"/>
</dbReference>
<dbReference type="InterPro" id="IPR015813">
    <property type="entry name" value="Pyrv/PenolPyrv_kinase-like_dom"/>
</dbReference>
<dbReference type="InterPro" id="IPR040442">
    <property type="entry name" value="Pyrv_kinase-like_dom_sf"/>
</dbReference>
<dbReference type="NCBIfam" id="TIGR00222">
    <property type="entry name" value="panB"/>
    <property type="match status" value="1"/>
</dbReference>
<dbReference type="NCBIfam" id="NF001452">
    <property type="entry name" value="PRK00311.1"/>
    <property type="match status" value="1"/>
</dbReference>
<dbReference type="PANTHER" id="PTHR20881">
    <property type="entry name" value="3-METHYL-2-OXOBUTANOATE HYDROXYMETHYLTRANSFERASE"/>
    <property type="match status" value="1"/>
</dbReference>
<dbReference type="PANTHER" id="PTHR20881:SF0">
    <property type="entry name" value="3-METHYL-2-OXOBUTANOATE HYDROXYMETHYLTRANSFERASE"/>
    <property type="match status" value="1"/>
</dbReference>
<dbReference type="Pfam" id="PF02548">
    <property type="entry name" value="Pantoate_transf"/>
    <property type="match status" value="1"/>
</dbReference>
<dbReference type="PIRSF" id="PIRSF000388">
    <property type="entry name" value="Pantoate_hydroxy_MeTrfase"/>
    <property type="match status" value="1"/>
</dbReference>
<dbReference type="SUPFAM" id="SSF51621">
    <property type="entry name" value="Phosphoenolpyruvate/pyruvate domain"/>
    <property type="match status" value="1"/>
</dbReference>
<proteinExistence type="inferred from homology"/>
<feature type="chain" id="PRO_0000297361" description="3-methyl-2-oxobutanoate hydroxymethyltransferase">
    <location>
        <begin position="1"/>
        <end position="260"/>
    </location>
</feature>
<feature type="active site" description="Proton acceptor" evidence="1">
    <location>
        <position position="178"/>
    </location>
</feature>
<feature type="binding site" evidence="1">
    <location>
        <begin position="42"/>
        <end position="43"/>
    </location>
    <ligand>
        <name>3-methyl-2-oxobutanoate</name>
        <dbReference type="ChEBI" id="CHEBI:11851"/>
    </ligand>
</feature>
<feature type="binding site" evidence="1">
    <location>
        <position position="42"/>
    </location>
    <ligand>
        <name>Mg(2+)</name>
        <dbReference type="ChEBI" id="CHEBI:18420"/>
    </ligand>
</feature>
<feature type="binding site" evidence="1">
    <location>
        <position position="81"/>
    </location>
    <ligand>
        <name>3-methyl-2-oxobutanoate</name>
        <dbReference type="ChEBI" id="CHEBI:11851"/>
    </ligand>
</feature>
<feature type="binding site" evidence="1">
    <location>
        <position position="81"/>
    </location>
    <ligand>
        <name>Mg(2+)</name>
        <dbReference type="ChEBI" id="CHEBI:18420"/>
    </ligand>
</feature>
<feature type="binding site" evidence="1">
    <location>
        <position position="109"/>
    </location>
    <ligand>
        <name>3-methyl-2-oxobutanoate</name>
        <dbReference type="ChEBI" id="CHEBI:11851"/>
    </ligand>
</feature>
<feature type="binding site" evidence="1">
    <location>
        <position position="111"/>
    </location>
    <ligand>
        <name>Mg(2+)</name>
        <dbReference type="ChEBI" id="CHEBI:18420"/>
    </ligand>
</feature>